<accession>P24952</accession>
<accession>Q34080</accession>
<accession>Q34081</accession>
<evidence type="ECO:0000250" key="1"/>
<evidence type="ECO:0000250" key="2">
    <source>
        <dbReference type="UniProtKB" id="P00157"/>
    </source>
</evidence>
<evidence type="ECO:0000255" key="3">
    <source>
        <dbReference type="PROSITE-ProRule" id="PRU00967"/>
    </source>
</evidence>
<evidence type="ECO:0000255" key="4">
    <source>
        <dbReference type="PROSITE-ProRule" id="PRU00968"/>
    </source>
</evidence>
<evidence type="ECO:0000305" key="5"/>
<keyword id="KW-0249">Electron transport</keyword>
<keyword id="KW-0349">Heme</keyword>
<keyword id="KW-0408">Iron</keyword>
<keyword id="KW-0472">Membrane</keyword>
<keyword id="KW-0479">Metal-binding</keyword>
<keyword id="KW-0496">Mitochondrion</keyword>
<keyword id="KW-0999">Mitochondrion inner membrane</keyword>
<keyword id="KW-0679">Respiratory chain</keyword>
<keyword id="KW-0812">Transmembrane</keyword>
<keyword id="KW-1133">Transmembrane helix</keyword>
<keyword id="KW-0813">Transport</keyword>
<keyword id="KW-0830">Ubiquinone</keyword>
<proteinExistence type="inferred from homology"/>
<reference key="1">
    <citation type="journal article" date="1991" name="J. Mol. Evol.">
        <title>Evolution of the cytochrome b gene of mammals.</title>
        <authorList>
            <person name="Irwin D.M."/>
            <person name="Kocher T.D."/>
            <person name="Wilson A.C."/>
        </authorList>
    </citation>
    <scope>NUCLEOTIDE SEQUENCE [GENOMIC DNA]</scope>
</reference>
<reference key="2">
    <citation type="journal article" date="1994" name="Proc. R. Soc. B">
        <title>Molecular evolution of the family Camelidae: a mitochondrial DNA study.</title>
        <authorList>
            <person name="Stanley H.F."/>
            <person name="Kadwell M."/>
            <person name="Wheeler J.C."/>
        </authorList>
    </citation>
    <scope>NUCLEOTIDE SEQUENCE [GENOMIC DNA]</scope>
</reference>
<reference key="3">
    <citation type="journal article" date="1994" name="Mol. Biol. Evol.">
        <title>Phylogeny of all major groups of cetaceans based on DNA sequences from three mitochondrial genes.</title>
        <authorList>
            <person name="Milinkovitch M.C."/>
            <person name="Meyer A."/>
            <person name="Powell J.R."/>
        </authorList>
    </citation>
    <scope>NUCLEOTIDE SEQUENCE [GENOMIC DNA] OF 1-134</scope>
</reference>
<comment type="function">
    <text evidence="2">Component of the ubiquinol-cytochrome c reductase complex (complex III or cytochrome b-c1 complex) that is part of the mitochondrial respiratory chain. The b-c1 complex mediates electron transfer from ubiquinol to cytochrome c. Contributes to the generation of a proton gradient across the mitochondrial membrane that is then used for ATP synthesis.</text>
</comment>
<comment type="cofactor">
    <cofactor evidence="2">
        <name>heme b</name>
        <dbReference type="ChEBI" id="CHEBI:60344"/>
    </cofactor>
    <text evidence="2">Binds 2 heme b groups non-covalently.</text>
</comment>
<comment type="subunit">
    <text evidence="2">The cytochrome bc1 complex contains 11 subunits: 3 respiratory subunits (MT-CYB, CYC1 and UQCRFS1), 2 core proteins (UQCRC1 and UQCRC2) and 6 low-molecular weight proteins (UQCRH/QCR6, UQCRB/QCR7, UQCRQ/QCR8, UQCR10/QCR9, UQCR11/QCR10 and a cleavage product of UQCRFS1). This cytochrome bc1 complex then forms a dimer.</text>
</comment>
<comment type="subcellular location">
    <subcellularLocation>
        <location evidence="2">Mitochondrion inner membrane</location>
        <topology evidence="2">Multi-pass membrane protein</topology>
    </subcellularLocation>
</comment>
<comment type="miscellaneous">
    <text evidence="1">Heme 1 (or BL or b562) is low-potential and absorbs at about 562 nm, and heme 2 (or BH or b566) is high-potential and absorbs at about 566 nm.</text>
</comment>
<comment type="similarity">
    <text evidence="3 4">Belongs to the cytochrome b family.</text>
</comment>
<comment type="caution">
    <text evidence="2">The full-length protein contains only eight transmembrane helices, not nine as predicted by bioinformatics tools.</text>
</comment>
<organism>
    <name type="scientific">Camelus dromedarius</name>
    <name type="common">Dromedary</name>
    <name type="synonym">Arabian camel</name>
    <dbReference type="NCBI Taxonomy" id="9838"/>
    <lineage>
        <taxon>Eukaryota</taxon>
        <taxon>Metazoa</taxon>
        <taxon>Chordata</taxon>
        <taxon>Craniata</taxon>
        <taxon>Vertebrata</taxon>
        <taxon>Euteleostomi</taxon>
        <taxon>Mammalia</taxon>
        <taxon>Eutheria</taxon>
        <taxon>Laurasiatheria</taxon>
        <taxon>Artiodactyla</taxon>
        <taxon>Tylopoda</taxon>
        <taxon>Camelidae</taxon>
        <taxon>Camelus</taxon>
    </lineage>
</organism>
<feature type="chain" id="PRO_0000060712" description="Cytochrome b">
    <location>
        <begin position="1"/>
        <end position="379"/>
    </location>
</feature>
<feature type="transmembrane region" description="Helical" evidence="2">
    <location>
        <begin position="33"/>
        <end position="53"/>
    </location>
</feature>
<feature type="transmembrane region" description="Helical" evidence="2">
    <location>
        <begin position="77"/>
        <end position="98"/>
    </location>
</feature>
<feature type="transmembrane region" description="Helical" evidence="2">
    <location>
        <begin position="113"/>
        <end position="133"/>
    </location>
</feature>
<feature type="transmembrane region" description="Helical" evidence="2">
    <location>
        <begin position="178"/>
        <end position="198"/>
    </location>
</feature>
<feature type="transmembrane region" description="Helical" evidence="2">
    <location>
        <begin position="226"/>
        <end position="246"/>
    </location>
</feature>
<feature type="transmembrane region" description="Helical" evidence="2">
    <location>
        <begin position="288"/>
        <end position="308"/>
    </location>
</feature>
<feature type="transmembrane region" description="Helical" evidence="2">
    <location>
        <begin position="320"/>
        <end position="340"/>
    </location>
</feature>
<feature type="transmembrane region" description="Helical" evidence="2">
    <location>
        <begin position="347"/>
        <end position="367"/>
    </location>
</feature>
<feature type="binding site" description="axial binding residue" evidence="2">
    <location>
        <position position="83"/>
    </location>
    <ligand>
        <name>heme b</name>
        <dbReference type="ChEBI" id="CHEBI:60344"/>
        <label>b562</label>
    </ligand>
    <ligandPart>
        <name>Fe</name>
        <dbReference type="ChEBI" id="CHEBI:18248"/>
    </ligandPart>
</feature>
<feature type="binding site" description="axial binding residue" evidence="2">
    <location>
        <position position="97"/>
    </location>
    <ligand>
        <name>heme b</name>
        <dbReference type="ChEBI" id="CHEBI:60344"/>
        <label>b566</label>
    </ligand>
    <ligandPart>
        <name>Fe</name>
        <dbReference type="ChEBI" id="CHEBI:18248"/>
    </ligandPart>
</feature>
<feature type="binding site" description="axial binding residue" evidence="2">
    <location>
        <position position="182"/>
    </location>
    <ligand>
        <name>heme b</name>
        <dbReference type="ChEBI" id="CHEBI:60344"/>
        <label>b562</label>
    </ligand>
    <ligandPart>
        <name>Fe</name>
        <dbReference type="ChEBI" id="CHEBI:18248"/>
    </ligandPart>
</feature>
<feature type="binding site" description="axial binding residue" evidence="2">
    <location>
        <position position="196"/>
    </location>
    <ligand>
        <name>heme b</name>
        <dbReference type="ChEBI" id="CHEBI:60344"/>
        <label>b566</label>
    </ligand>
    <ligandPart>
        <name>Fe</name>
        <dbReference type="ChEBI" id="CHEBI:18248"/>
    </ligandPart>
</feature>
<feature type="binding site" evidence="2">
    <location>
        <position position="201"/>
    </location>
    <ligand>
        <name>a ubiquinone</name>
        <dbReference type="ChEBI" id="CHEBI:16389"/>
    </ligand>
</feature>
<feature type="sequence conflict" description="In Ref. 2; AAA21484." evidence="5" ref="2">
    <original>M</original>
    <variation>I</variation>
    <location>
        <position position="117"/>
    </location>
</feature>
<feature type="sequence conflict" description="In Ref. 2; AAA21484." evidence="5" ref="2">
    <original>L</original>
    <variation>H</variation>
    <location>
        <position position="301"/>
    </location>
</feature>
<gene>
    <name type="primary">MT-CYB</name>
    <name type="synonym">COB</name>
    <name type="synonym">CYTB</name>
    <name type="synonym">MTCYB</name>
</gene>
<geneLocation type="mitochondrion"/>
<sequence length="379" mass="42512">MTNIRKSHPLLKIMNDAFIDLPAPSNISSWWNFGSLLGVCLIMQILTGLFLAMHYTSDTTTAFSSVAHICRDVNYGWIIRYLHANGASMFFICLYIHVGRGLYYGSYTFSETWNVGMVLLFTVMATAFMGYVLPWGQMSFWGATVITNLLSAIPYIGTTLVEWIWGGFSVDKATLTRFFAFHFILPFIITALVAVHLLFLHETGSNNPTGISSDMDKIPFHPYYTIKDILGALLLMLALLILVLFSPDLLGDPDNYTPANPLNTPPHIKPEWYFLFAYAILRSIPNKLGGVLALVLSILILAFIPALHTSKQRSMTFRPISQCLFWVLVADLLTLTWIGGQPVEPPFIMIGQVASILYFSLILILMPVAGIIENRILKW</sequence>
<name>CYB_CAMDR</name>
<dbReference type="EMBL" id="X56281">
    <property type="protein sequence ID" value="CAA39728.1"/>
    <property type="molecule type" value="Genomic_DNA"/>
</dbReference>
<dbReference type="EMBL" id="U06426">
    <property type="protein sequence ID" value="AAA21484.1"/>
    <property type="molecule type" value="Genomic_DNA"/>
</dbReference>
<dbReference type="EMBL" id="U13127">
    <property type="protein sequence ID" value="AAC48437.1"/>
    <property type="molecule type" value="Genomic_DNA"/>
</dbReference>
<dbReference type="PIR" id="S17406">
    <property type="entry name" value="S17406"/>
</dbReference>
<dbReference type="SMR" id="P24952"/>
<dbReference type="GO" id="GO:0005743">
    <property type="term" value="C:mitochondrial inner membrane"/>
    <property type="evidence" value="ECO:0007669"/>
    <property type="project" value="UniProtKB-SubCell"/>
</dbReference>
<dbReference type="GO" id="GO:0045275">
    <property type="term" value="C:respiratory chain complex III"/>
    <property type="evidence" value="ECO:0007669"/>
    <property type="project" value="InterPro"/>
</dbReference>
<dbReference type="GO" id="GO:0046872">
    <property type="term" value="F:metal ion binding"/>
    <property type="evidence" value="ECO:0007669"/>
    <property type="project" value="UniProtKB-KW"/>
</dbReference>
<dbReference type="GO" id="GO:0008121">
    <property type="term" value="F:ubiquinol-cytochrome-c reductase activity"/>
    <property type="evidence" value="ECO:0007669"/>
    <property type="project" value="InterPro"/>
</dbReference>
<dbReference type="GO" id="GO:0006122">
    <property type="term" value="P:mitochondrial electron transport, ubiquinol to cytochrome c"/>
    <property type="evidence" value="ECO:0007669"/>
    <property type="project" value="TreeGrafter"/>
</dbReference>
<dbReference type="CDD" id="cd00290">
    <property type="entry name" value="cytochrome_b_C"/>
    <property type="match status" value="1"/>
</dbReference>
<dbReference type="CDD" id="cd00284">
    <property type="entry name" value="Cytochrome_b_N"/>
    <property type="match status" value="1"/>
</dbReference>
<dbReference type="FunFam" id="1.20.810.10:FF:000002">
    <property type="entry name" value="Cytochrome b"/>
    <property type="match status" value="1"/>
</dbReference>
<dbReference type="Gene3D" id="1.20.810.10">
    <property type="entry name" value="Cytochrome Bc1 Complex, Chain C"/>
    <property type="match status" value="1"/>
</dbReference>
<dbReference type="InterPro" id="IPR005798">
    <property type="entry name" value="Cyt_b/b6_C"/>
</dbReference>
<dbReference type="InterPro" id="IPR036150">
    <property type="entry name" value="Cyt_b/b6_C_sf"/>
</dbReference>
<dbReference type="InterPro" id="IPR005797">
    <property type="entry name" value="Cyt_b/b6_N"/>
</dbReference>
<dbReference type="InterPro" id="IPR027387">
    <property type="entry name" value="Cytb/b6-like_sf"/>
</dbReference>
<dbReference type="InterPro" id="IPR030689">
    <property type="entry name" value="Cytochrome_b"/>
</dbReference>
<dbReference type="InterPro" id="IPR048260">
    <property type="entry name" value="Cytochrome_b_C_euk/bac"/>
</dbReference>
<dbReference type="InterPro" id="IPR048259">
    <property type="entry name" value="Cytochrome_b_N_euk/bac"/>
</dbReference>
<dbReference type="InterPro" id="IPR016174">
    <property type="entry name" value="Di-haem_cyt_TM"/>
</dbReference>
<dbReference type="PANTHER" id="PTHR19271">
    <property type="entry name" value="CYTOCHROME B"/>
    <property type="match status" value="1"/>
</dbReference>
<dbReference type="PANTHER" id="PTHR19271:SF16">
    <property type="entry name" value="CYTOCHROME B"/>
    <property type="match status" value="1"/>
</dbReference>
<dbReference type="Pfam" id="PF00032">
    <property type="entry name" value="Cytochrom_B_C"/>
    <property type="match status" value="1"/>
</dbReference>
<dbReference type="Pfam" id="PF00033">
    <property type="entry name" value="Cytochrome_B"/>
    <property type="match status" value="1"/>
</dbReference>
<dbReference type="PIRSF" id="PIRSF038885">
    <property type="entry name" value="COB"/>
    <property type="match status" value="1"/>
</dbReference>
<dbReference type="SUPFAM" id="SSF81648">
    <property type="entry name" value="a domain/subunit of cytochrome bc1 complex (Ubiquinol-cytochrome c reductase)"/>
    <property type="match status" value="1"/>
</dbReference>
<dbReference type="SUPFAM" id="SSF81342">
    <property type="entry name" value="Transmembrane di-heme cytochromes"/>
    <property type="match status" value="1"/>
</dbReference>
<dbReference type="PROSITE" id="PS51003">
    <property type="entry name" value="CYTB_CTER"/>
    <property type="match status" value="1"/>
</dbReference>
<dbReference type="PROSITE" id="PS51002">
    <property type="entry name" value="CYTB_NTER"/>
    <property type="match status" value="1"/>
</dbReference>
<protein>
    <recommendedName>
        <fullName>Cytochrome b</fullName>
    </recommendedName>
    <alternativeName>
        <fullName>Complex III subunit 3</fullName>
    </alternativeName>
    <alternativeName>
        <fullName>Complex III subunit III</fullName>
    </alternativeName>
    <alternativeName>
        <fullName>Cytochrome b-c1 complex subunit 3</fullName>
    </alternativeName>
    <alternativeName>
        <fullName>Ubiquinol-cytochrome-c reductase complex cytochrome b subunit</fullName>
    </alternativeName>
</protein>